<comment type="function">
    <text evidence="2">Catalyzes the reversible phosphorolytic cleavage of trehalose. Phosphorolysis is specific for trehalose.</text>
</comment>
<comment type="catalytic activity">
    <reaction evidence="2">
        <text>alpha,alpha-trehalose + phosphate = beta-D-glucose 1-phosphate + D-glucose</text>
        <dbReference type="Rhea" id="RHEA:23512"/>
        <dbReference type="ChEBI" id="CHEBI:4167"/>
        <dbReference type="ChEBI" id="CHEBI:16551"/>
        <dbReference type="ChEBI" id="CHEBI:43474"/>
        <dbReference type="ChEBI" id="CHEBI:57684"/>
        <dbReference type="EC" id="2.4.1.64"/>
    </reaction>
</comment>
<comment type="biophysicochemical properties">
    <kinetics>
        <KM evidence="2">4.1 mM for trehalose</KM>
        <KM evidence="2">1.1 mM for phosphate</KM>
    </kinetics>
    <phDependence>
        <text evidence="2">Optimum pH is 7.0-8.0.</text>
    </phDependence>
    <temperatureDependence>
        <text evidence="2">Optimum temperature is 75 degrees Celsius.</text>
    </temperatureDependence>
</comment>
<comment type="pathway">
    <text>Glycan degradation; trehalose degradation.</text>
</comment>
<comment type="subunit">
    <text evidence="2">Homodimer.</text>
</comment>
<comment type="similarity">
    <text evidence="3">Belongs to the glycosyl hydrolase 65 family.</text>
</comment>
<reference key="1">
    <citation type="journal article" date="2002" name="Biosci. Biotechnol. Biochem.">
        <title>Characterization of trehalose phosphorylase from Bacillus stearothermophilus SK-1 and nucleotide sequence of the corresponding gene.</title>
        <authorList>
            <person name="Inoue Y."/>
            <person name="Ishii K."/>
            <person name="Tomita T."/>
            <person name="Yatake T."/>
            <person name="Fukui F."/>
        </authorList>
    </citation>
    <scope>NUCLEOTIDE SEQUENCE [GENOMIC DNA]</scope>
    <scope>PROTEIN SEQUENCE OF 2-20</scope>
    <scope>FUNCTION</scope>
    <scope>CATALYTIC ACTIVITY</scope>
    <scope>BIOPHYSICOCHEMICAL PROPERTIES</scope>
    <scope>SUBUNIT</scope>
    <source>
        <strain>SK-1</strain>
    </source>
</reference>
<proteinExistence type="evidence at protein level"/>
<dbReference type="EC" id="2.4.1.64"/>
<dbReference type="EMBL" id="AB079610">
    <property type="protein sequence ID" value="BAC20640.1"/>
    <property type="molecule type" value="Genomic_DNA"/>
</dbReference>
<dbReference type="SMR" id="Q8GRC3"/>
<dbReference type="CAZy" id="GH65">
    <property type="family name" value="Glycoside Hydrolase Family 65"/>
</dbReference>
<dbReference type="BioCyc" id="MetaCyc:MONOMER-5885"/>
<dbReference type="UniPathway" id="UPA00300"/>
<dbReference type="GO" id="GO:0047656">
    <property type="term" value="F:alpha,alpha-trehalose phosphorylase activity"/>
    <property type="evidence" value="ECO:0000314"/>
    <property type="project" value="UniProtKB"/>
</dbReference>
<dbReference type="GO" id="GO:0030246">
    <property type="term" value="F:carbohydrate binding"/>
    <property type="evidence" value="ECO:0007669"/>
    <property type="project" value="InterPro"/>
</dbReference>
<dbReference type="GO" id="GO:0004553">
    <property type="term" value="F:hydrolase activity, hydrolyzing O-glycosyl compounds"/>
    <property type="evidence" value="ECO:0007669"/>
    <property type="project" value="TreeGrafter"/>
</dbReference>
<dbReference type="GO" id="GO:0005993">
    <property type="term" value="P:trehalose catabolic process"/>
    <property type="evidence" value="ECO:0000314"/>
    <property type="project" value="UniProtKB"/>
</dbReference>
<dbReference type="FunFam" id="2.60.420.10:FF:000001">
    <property type="entry name" value="Family 65 glycosyl hydrolase"/>
    <property type="match status" value="1"/>
</dbReference>
<dbReference type="Gene3D" id="1.50.10.10">
    <property type="match status" value="1"/>
</dbReference>
<dbReference type="Gene3D" id="2.70.98.40">
    <property type="entry name" value="Glycoside hydrolase, family 65, N-terminal domain"/>
    <property type="match status" value="1"/>
</dbReference>
<dbReference type="Gene3D" id="2.60.420.10">
    <property type="entry name" value="Maltose phosphorylase, domain 3"/>
    <property type="match status" value="1"/>
</dbReference>
<dbReference type="InterPro" id="IPR008928">
    <property type="entry name" value="6-hairpin_glycosidase_sf"/>
</dbReference>
<dbReference type="InterPro" id="IPR012341">
    <property type="entry name" value="6hp_glycosidase-like_sf"/>
</dbReference>
<dbReference type="InterPro" id="IPR011013">
    <property type="entry name" value="Gal_mutarotase_sf_dom"/>
</dbReference>
<dbReference type="InterPro" id="IPR005194">
    <property type="entry name" value="Glyco_hydro_65_C"/>
</dbReference>
<dbReference type="InterPro" id="IPR005195">
    <property type="entry name" value="Glyco_hydro_65_M"/>
</dbReference>
<dbReference type="InterPro" id="IPR005196">
    <property type="entry name" value="Glyco_hydro_65_N"/>
</dbReference>
<dbReference type="InterPro" id="IPR037018">
    <property type="entry name" value="Glyco_hydro_65_N_sf"/>
</dbReference>
<dbReference type="InterPro" id="IPR017045">
    <property type="entry name" value="Malt_Pase/Glycosyl_Hdrlase"/>
</dbReference>
<dbReference type="PANTHER" id="PTHR11051">
    <property type="entry name" value="GLYCOSYL HYDROLASE-RELATED"/>
    <property type="match status" value="1"/>
</dbReference>
<dbReference type="PANTHER" id="PTHR11051:SF8">
    <property type="entry name" value="PROTEIN-GLUCOSYLGALACTOSYLHYDROXYLYSINE GLUCOSIDASE"/>
    <property type="match status" value="1"/>
</dbReference>
<dbReference type="Pfam" id="PF03633">
    <property type="entry name" value="Glyco_hydro_65C"/>
    <property type="match status" value="1"/>
</dbReference>
<dbReference type="Pfam" id="PF03632">
    <property type="entry name" value="Glyco_hydro_65m"/>
    <property type="match status" value="1"/>
</dbReference>
<dbReference type="Pfam" id="PF03636">
    <property type="entry name" value="Glyco_hydro_65N"/>
    <property type="match status" value="1"/>
</dbReference>
<dbReference type="PIRSF" id="PIRSF036289">
    <property type="entry name" value="Glycosyl_hydrolase_malt_phosph"/>
    <property type="match status" value="1"/>
</dbReference>
<dbReference type="SUPFAM" id="SSF74650">
    <property type="entry name" value="Galactose mutarotase-like"/>
    <property type="match status" value="1"/>
</dbReference>
<dbReference type="SUPFAM" id="SSF48208">
    <property type="entry name" value="Six-hairpin glycosidases"/>
    <property type="match status" value="1"/>
</dbReference>
<name>TREP_GEOSE</name>
<sequence>MSWSISSNQLNIENLLNEESLFFTGNGYIGVRGNFEEKYYDGASSIRGTYINAFHDITDINYGEKLYAFPETQQKLVNVIDAQTVQIYFGEEEERFSLFEGEVIQYERHLHMDKGFSERVIHWRSPGGKEVKLKFKRLTSFIYKELFIQEITIEPVNFFGKTKVVSTVNGDVSNFVDPSDPRVGSGHAKLLTVSDTVIEGDFVSIETKTKRSNLYAACTSTCRLNIDFQREYVKNEKSVETVLTFELTEKAIMTKINIYTDTLRHGDRPLRTGLDLCQKLSCLTFNDLKEQQKHYLDKFWLYADVEISGDQALQEGIRFNLFHLLQSAGRDRFSNIAAKGLSGEGYEGHYFWDTEIYMVPVFLMTNPELAKQLLIYRYSILDKARERAREMGHRKGALFPWRTISGGECSSYFPAGTAQYHISADIAYSYVQYYLVTKDLDFLKSYGAELLIETARLWMDTGHYHEGKFKIDAVTGPDEYTCIVNNNYYTNVMAKHNLRWAAKSVAELEKHAPDTLASLKAKLEITDEEIAEWIKAAEAMYLPYDPTLNINPQDDTFLQKQVWDFDNTPKEHYPLLLHYHPLTLYRYQVCKQADTVLAHFLLEDEQDESVIRDSYHYYEKITTHDSSLSSCVFSIMAAKIGELDKAYEYFIETARLDLDNTHGNTKDGLHMANMGGTWMAIVYGFAGLRIKESGLSLAPVIPKQWQSYRFSIQYLGRHISVSVDTKGTKVNLLNGEELTIKLYGKKHQLTKDEPLEITFNNGRVD</sequence>
<evidence type="ECO:0000250" key="1">
    <source>
        <dbReference type="UniProtKB" id="D6XZ22"/>
    </source>
</evidence>
<evidence type="ECO:0000269" key="2">
    <source>
    </source>
</evidence>
<evidence type="ECO:0000305" key="3"/>
<accession>Q8GRC3</accession>
<gene>
    <name type="primary">treP</name>
</gene>
<keyword id="KW-0903">Direct protein sequencing</keyword>
<keyword id="KW-0328">Glycosyltransferase</keyword>
<keyword id="KW-0808">Transferase</keyword>
<protein>
    <recommendedName>
        <fullName>Alpha,alpha-trehalose phosphorylase</fullName>
        <shortName>TPase</shortName>
        <ecNumber>2.4.1.64</ecNumber>
    </recommendedName>
</protein>
<organism>
    <name type="scientific">Geobacillus stearothermophilus</name>
    <name type="common">Bacillus stearothermophilus</name>
    <dbReference type="NCBI Taxonomy" id="1422"/>
    <lineage>
        <taxon>Bacteria</taxon>
        <taxon>Bacillati</taxon>
        <taxon>Bacillota</taxon>
        <taxon>Bacilli</taxon>
        <taxon>Bacillales</taxon>
        <taxon>Anoxybacillaceae</taxon>
        <taxon>Geobacillus</taxon>
    </lineage>
</organism>
<feature type="initiator methionine" description="Removed" evidence="2">
    <location>
        <position position="1"/>
    </location>
</feature>
<feature type="chain" id="PRO_0000418977" description="Alpha,alpha-trehalose phosphorylase">
    <location>
        <begin position="2"/>
        <end position="765"/>
    </location>
</feature>
<feature type="active site" description="Proton donor" evidence="1">
    <location>
        <position position="479"/>
    </location>
</feature>
<feature type="binding site" evidence="1">
    <location>
        <begin position="352"/>
        <end position="353"/>
    </location>
    <ligand>
        <name>substrate</name>
    </ligand>
</feature>
<feature type="binding site" evidence="1">
    <location>
        <begin position="591"/>
        <end position="592"/>
    </location>
    <ligand>
        <name>substrate</name>
    </ligand>
</feature>